<comment type="function">
    <text evidence="1">The UvrABC repair system catalyzes the recognition and processing of DNA lesions. UvrC both incises the 5' and 3' sides of the lesion. The N-terminal half is responsible for the 3' incision and the C-terminal half is responsible for the 5' incision.</text>
</comment>
<comment type="subunit">
    <text evidence="1">Interacts with UvrB in an incision complex.</text>
</comment>
<comment type="subcellular location">
    <subcellularLocation>
        <location evidence="1">Cytoplasm</location>
    </subcellularLocation>
</comment>
<comment type="similarity">
    <text evidence="1">Belongs to the UvrC family.</text>
</comment>
<comment type="sequence caution" evidence="2">
    <conflict type="erroneous initiation">
        <sequence resource="EMBL-CDS" id="CAE37066"/>
    </conflict>
</comment>
<protein>
    <recommendedName>
        <fullName evidence="1">UvrABC system protein C</fullName>
        <shortName evidence="1">Protein UvrC</shortName>
    </recommendedName>
    <alternativeName>
        <fullName evidence="1">Excinuclease ABC subunit C</fullName>
    </alternativeName>
</protein>
<accession>Q7W9J4</accession>
<organism>
    <name type="scientific">Bordetella parapertussis (strain 12822 / ATCC BAA-587 / NCTC 13253)</name>
    <dbReference type="NCBI Taxonomy" id="257311"/>
    <lineage>
        <taxon>Bacteria</taxon>
        <taxon>Pseudomonadati</taxon>
        <taxon>Pseudomonadota</taxon>
        <taxon>Betaproteobacteria</taxon>
        <taxon>Burkholderiales</taxon>
        <taxon>Alcaligenaceae</taxon>
        <taxon>Bordetella</taxon>
    </lineage>
</organism>
<feature type="chain" id="PRO_0000264872" description="UvrABC system protein C">
    <location>
        <begin position="1"/>
        <end position="609"/>
    </location>
</feature>
<feature type="domain" description="GIY-YIG" evidence="1">
    <location>
        <begin position="16"/>
        <end position="94"/>
    </location>
</feature>
<feature type="domain" description="UVR" evidence="1">
    <location>
        <begin position="203"/>
        <end position="238"/>
    </location>
</feature>
<proteinExistence type="inferred from homology"/>
<reference key="1">
    <citation type="journal article" date="2003" name="Nat. Genet.">
        <title>Comparative analysis of the genome sequences of Bordetella pertussis, Bordetella parapertussis and Bordetella bronchiseptica.</title>
        <authorList>
            <person name="Parkhill J."/>
            <person name="Sebaihia M."/>
            <person name="Preston A."/>
            <person name="Murphy L.D."/>
            <person name="Thomson N.R."/>
            <person name="Harris D.E."/>
            <person name="Holden M.T.G."/>
            <person name="Churcher C.M."/>
            <person name="Bentley S.D."/>
            <person name="Mungall K.L."/>
            <person name="Cerdeno-Tarraga A.-M."/>
            <person name="Temple L."/>
            <person name="James K.D."/>
            <person name="Harris B."/>
            <person name="Quail M.A."/>
            <person name="Achtman M."/>
            <person name="Atkin R."/>
            <person name="Baker S."/>
            <person name="Basham D."/>
            <person name="Bason N."/>
            <person name="Cherevach I."/>
            <person name="Chillingworth T."/>
            <person name="Collins M."/>
            <person name="Cronin A."/>
            <person name="Davis P."/>
            <person name="Doggett J."/>
            <person name="Feltwell T."/>
            <person name="Goble A."/>
            <person name="Hamlin N."/>
            <person name="Hauser H."/>
            <person name="Holroyd S."/>
            <person name="Jagels K."/>
            <person name="Leather S."/>
            <person name="Moule S."/>
            <person name="Norberczak H."/>
            <person name="O'Neil S."/>
            <person name="Ormond D."/>
            <person name="Price C."/>
            <person name="Rabbinowitsch E."/>
            <person name="Rutter S."/>
            <person name="Sanders M."/>
            <person name="Saunders D."/>
            <person name="Seeger K."/>
            <person name="Sharp S."/>
            <person name="Simmonds M."/>
            <person name="Skelton J."/>
            <person name="Squares R."/>
            <person name="Squares S."/>
            <person name="Stevens K."/>
            <person name="Unwin L."/>
            <person name="Whitehead S."/>
            <person name="Barrell B.G."/>
            <person name="Maskell D.J."/>
        </authorList>
    </citation>
    <scope>NUCLEOTIDE SEQUENCE [LARGE SCALE GENOMIC DNA]</scope>
    <source>
        <strain>12822 / ATCC BAA-587 / NCTC 13253</strain>
    </source>
</reference>
<keyword id="KW-0963">Cytoplasm</keyword>
<keyword id="KW-0227">DNA damage</keyword>
<keyword id="KW-0228">DNA excision</keyword>
<keyword id="KW-0234">DNA repair</keyword>
<keyword id="KW-0267">Excision nuclease</keyword>
<keyword id="KW-0742">SOS response</keyword>
<name>UVRC_BORPA</name>
<evidence type="ECO:0000255" key="1">
    <source>
        <dbReference type="HAMAP-Rule" id="MF_00203"/>
    </source>
</evidence>
<evidence type="ECO:0000305" key="2"/>
<dbReference type="EMBL" id="BX640428">
    <property type="protein sequence ID" value="CAE37066.1"/>
    <property type="status" value="ALT_INIT"/>
    <property type="molecule type" value="Genomic_DNA"/>
</dbReference>
<dbReference type="RefSeq" id="WP_033449735.1">
    <property type="nucleotide sequence ID" value="NC_002928.3"/>
</dbReference>
<dbReference type="SMR" id="Q7W9J4"/>
<dbReference type="GeneID" id="93203529"/>
<dbReference type="KEGG" id="bpa:BPP1765"/>
<dbReference type="HOGENOM" id="CLU_014841_3_0_4"/>
<dbReference type="Proteomes" id="UP000001421">
    <property type="component" value="Chromosome"/>
</dbReference>
<dbReference type="GO" id="GO:0005737">
    <property type="term" value="C:cytoplasm"/>
    <property type="evidence" value="ECO:0007669"/>
    <property type="project" value="UniProtKB-SubCell"/>
</dbReference>
<dbReference type="GO" id="GO:0009380">
    <property type="term" value="C:excinuclease repair complex"/>
    <property type="evidence" value="ECO:0007669"/>
    <property type="project" value="InterPro"/>
</dbReference>
<dbReference type="GO" id="GO:0003677">
    <property type="term" value="F:DNA binding"/>
    <property type="evidence" value="ECO:0007669"/>
    <property type="project" value="UniProtKB-UniRule"/>
</dbReference>
<dbReference type="GO" id="GO:0009381">
    <property type="term" value="F:excinuclease ABC activity"/>
    <property type="evidence" value="ECO:0007669"/>
    <property type="project" value="UniProtKB-UniRule"/>
</dbReference>
<dbReference type="GO" id="GO:0006289">
    <property type="term" value="P:nucleotide-excision repair"/>
    <property type="evidence" value="ECO:0007669"/>
    <property type="project" value="UniProtKB-UniRule"/>
</dbReference>
<dbReference type="GO" id="GO:0009432">
    <property type="term" value="P:SOS response"/>
    <property type="evidence" value="ECO:0007669"/>
    <property type="project" value="UniProtKB-UniRule"/>
</dbReference>
<dbReference type="CDD" id="cd10434">
    <property type="entry name" value="GIY-YIG_UvrC_Cho"/>
    <property type="match status" value="1"/>
</dbReference>
<dbReference type="FunFam" id="3.30.420.340:FF:000001">
    <property type="entry name" value="UvrABC system protein C"/>
    <property type="match status" value="1"/>
</dbReference>
<dbReference type="FunFam" id="3.40.1440.10:FF:000001">
    <property type="entry name" value="UvrABC system protein C"/>
    <property type="match status" value="1"/>
</dbReference>
<dbReference type="Gene3D" id="1.10.150.20">
    <property type="entry name" value="5' to 3' exonuclease, C-terminal subdomain"/>
    <property type="match status" value="1"/>
</dbReference>
<dbReference type="Gene3D" id="3.40.1440.10">
    <property type="entry name" value="GIY-YIG endonuclease"/>
    <property type="match status" value="1"/>
</dbReference>
<dbReference type="Gene3D" id="4.10.860.10">
    <property type="entry name" value="UVR domain"/>
    <property type="match status" value="1"/>
</dbReference>
<dbReference type="Gene3D" id="3.30.420.340">
    <property type="entry name" value="UvrC, RNAse H endonuclease domain"/>
    <property type="match status" value="1"/>
</dbReference>
<dbReference type="HAMAP" id="MF_00203">
    <property type="entry name" value="UvrC"/>
    <property type="match status" value="1"/>
</dbReference>
<dbReference type="InterPro" id="IPR000305">
    <property type="entry name" value="GIY-YIG_endonuc"/>
</dbReference>
<dbReference type="InterPro" id="IPR035901">
    <property type="entry name" value="GIY-YIG_endonuc_sf"/>
</dbReference>
<dbReference type="InterPro" id="IPR047296">
    <property type="entry name" value="GIY-YIG_UvrC_Cho"/>
</dbReference>
<dbReference type="InterPro" id="IPR003583">
    <property type="entry name" value="Hlx-hairpin-Hlx_DNA-bd_motif"/>
</dbReference>
<dbReference type="InterPro" id="IPR010994">
    <property type="entry name" value="RuvA_2-like"/>
</dbReference>
<dbReference type="InterPro" id="IPR001943">
    <property type="entry name" value="UVR_dom"/>
</dbReference>
<dbReference type="InterPro" id="IPR036876">
    <property type="entry name" value="UVR_dom_sf"/>
</dbReference>
<dbReference type="InterPro" id="IPR050066">
    <property type="entry name" value="UvrABC_protein_C"/>
</dbReference>
<dbReference type="InterPro" id="IPR004791">
    <property type="entry name" value="UvrC"/>
</dbReference>
<dbReference type="InterPro" id="IPR001162">
    <property type="entry name" value="UvrC_RNase_H_dom"/>
</dbReference>
<dbReference type="InterPro" id="IPR038476">
    <property type="entry name" value="UvrC_RNase_H_dom_sf"/>
</dbReference>
<dbReference type="NCBIfam" id="NF001824">
    <property type="entry name" value="PRK00558.1-5"/>
    <property type="match status" value="1"/>
</dbReference>
<dbReference type="NCBIfam" id="TIGR00194">
    <property type="entry name" value="uvrC"/>
    <property type="match status" value="1"/>
</dbReference>
<dbReference type="PANTHER" id="PTHR30562:SF1">
    <property type="entry name" value="UVRABC SYSTEM PROTEIN C"/>
    <property type="match status" value="1"/>
</dbReference>
<dbReference type="PANTHER" id="PTHR30562">
    <property type="entry name" value="UVRC/OXIDOREDUCTASE"/>
    <property type="match status" value="1"/>
</dbReference>
<dbReference type="Pfam" id="PF01541">
    <property type="entry name" value="GIY-YIG"/>
    <property type="match status" value="1"/>
</dbReference>
<dbReference type="Pfam" id="PF14520">
    <property type="entry name" value="HHH_5"/>
    <property type="match status" value="1"/>
</dbReference>
<dbReference type="Pfam" id="PF02151">
    <property type="entry name" value="UVR"/>
    <property type="match status" value="1"/>
</dbReference>
<dbReference type="Pfam" id="PF22920">
    <property type="entry name" value="UvrC_RNaseH"/>
    <property type="match status" value="1"/>
</dbReference>
<dbReference type="Pfam" id="PF08459">
    <property type="entry name" value="UvrC_RNaseH_dom"/>
    <property type="match status" value="1"/>
</dbReference>
<dbReference type="SMART" id="SM00465">
    <property type="entry name" value="GIYc"/>
    <property type="match status" value="1"/>
</dbReference>
<dbReference type="SMART" id="SM00278">
    <property type="entry name" value="HhH1"/>
    <property type="match status" value="2"/>
</dbReference>
<dbReference type="SUPFAM" id="SSF46600">
    <property type="entry name" value="C-terminal UvrC-binding domain of UvrB"/>
    <property type="match status" value="1"/>
</dbReference>
<dbReference type="SUPFAM" id="SSF82771">
    <property type="entry name" value="GIY-YIG endonuclease"/>
    <property type="match status" value="1"/>
</dbReference>
<dbReference type="SUPFAM" id="SSF47781">
    <property type="entry name" value="RuvA domain 2-like"/>
    <property type="match status" value="1"/>
</dbReference>
<dbReference type="PROSITE" id="PS50164">
    <property type="entry name" value="GIY_YIG"/>
    <property type="match status" value="1"/>
</dbReference>
<dbReference type="PROSITE" id="PS50151">
    <property type="entry name" value="UVR"/>
    <property type="match status" value="1"/>
</dbReference>
<dbReference type="PROSITE" id="PS50165">
    <property type="entry name" value="UVRC"/>
    <property type="match status" value="1"/>
</dbReference>
<gene>
    <name evidence="1" type="primary">uvrC</name>
    <name type="ordered locus">BPP1765</name>
</gene>
<sequence length="609" mass="66707">MPDDFNLKSFLADLPHLPGVYRHLDAAGEVMYVGKARDLKKRVSSYFQKNLASPRIAQMVAKVASVDVTVTRSEAEALLLENNLIKSLRPRYNILFRDDKSYPYLLITGHAWPRIAYYRGATSKRGQYFGPYPNSWAVRETIQILQKVFRLRTCEDTVFANRSRPCLLHQIGRCSAPCVGVIEAGDYAHDVQRAVRFLNGEAREVMDEIEARMLQASTELRFEEAAVLRDQMGSLSKVLHQQTMENVGGDDTDVIAVASAGGKICVNLAMVRGGRHLGDKPFFPTHAEGEQPAQVLEAFVAQHYADGAMPPVLVCSHALPDSGLVGLLAEQGGTRAARVLTRPQGVRRSWLEQAQKNAEMALARALTESGARAGRTLALAEALDLDTDEESLDALRIECFDISHTAGEATQASCVVFLHHDMQPSLYRRYNIVGITPGDDYAAMRQVLTRRFGKVADGEAPMPGLVLIDGGKGQVEVARQVFVELGLDIQSLVGVAKGEGRKVGLETLVFADGRPPVALGKESAALMLIAQVRDEAHRFAITGMRARRAKTRNVSRLEEIEGIGARRRQRLLARFGGLSGVSSASIEDLASVEGISQELAVRIYDALHG</sequence>